<comment type="function">
    <text evidence="1">Catalyzes the dismutation of two molecules of 6,7-dimethyl-8-ribityllumazine, resulting in the formation of riboflavin and 5-amino-6-(D-ribitylamino)uracil.</text>
</comment>
<comment type="catalytic activity">
    <reaction>
        <text>2 6,7-dimethyl-8-(1-D-ribityl)lumazine + H(+) = 5-amino-6-(D-ribitylamino)uracil + riboflavin</text>
        <dbReference type="Rhea" id="RHEA:20772"/>
        <dbReference type="ChEBI" id="CHEBI:15378"/>
        <dbReference type="ChEBI" id="CHEBI:15934"/>
        <dbReference type="ChEBI" id="CHEBI:57986"/>
        <dbReference type="ChEBI" id="CHEBI:58201"/>
        <dbReference type="EC" id="2.5.1.9"/>
    </reaction>
</comment>
<comment type="pathway">
    <text>Cofactor biosynthesis; riboflavin biosynthesis; riboflavin from 2-hydroxy-3-oxobutyl phosphate and 5-amino-6-(D-ribitylamino)uracil: step 2/2.</text>
</comment>
<comment type="subunit">
    <text evidence="1">Homotrimer.</text>
</comment>
<organism>
    <name type="scientific">Buchnera aphidicola subsp. Baizongia pistaciae (strain Bp)</name>
    <dbReference type="NCBI Taxonomy" id="224915"/>
    <lineage>
        <taxon>Bacteria</taxon>
        <taxon>Pseudomonadati</taxon>
        <taxon>Pseudomonadota</taxon>
        <taxon>Gammaproteobacteria</taxon>
        <taxon>Enterobacterales</taxon>
        <taxon>Erwiniaceae</taxon>
        <taxon>Buchnera</taxon>
    </lineage>
</organism>
<protein>
    <recommendedName>
        <fullName>Riboflavin synthase</fullName>
        <shortName>RS</shortName>
        <ecNumber>2.5.1.9</ecNumber>
    </recommendedName>
</protein>
<dbReference type="EC" id="2.5.1.9"/>
<dbReference type="EMBL" id="AE016826">
    <property type="protein sequence ID" value="AAO26841.1"/>
    <property type="molecule type" value="Genomic_DNA"/>
</dbReference>
<dbReference type="RefSeq" id="WP_011091242.1">
    <property type="nucleotide sequence ID" value="NC_004545.1"/>
</dbReference>
<dbReference type="SMR" id="Q89AX1"/>
<dbReference type="STRING" id="224915.bbp_107"/>
<dbReference type="KEGG" id="bab:bbp_107"/>
<dbReference type="eggNOG" id="COG0307">
    <property type="taxonomic scope" value="Bacteria"/>
</dbReference>
<dbReference type="HOGENOM" id="CLU_034388_0_1_6"/>
<dbReference type="OrthoDB" id="9788537at2"/>
<dbReference type="UniPathway" id="UPA00275">
    <property type="reaction ID" value="UER00405"/>
</dbReference>
<dbReference type="Proteomes" id="UP000000601">
    <property type="component" value="Chromosome"/>
</dbReference>
<dbReference type="GO" id="GO:0005829">
    <property type="term" value="C:cytosol"/>
    <property type="evidence" value="ECO:0007669"/>
    <property type="project" value="TreeGrafter"/>
</dbReference>
<dbReference type="GO" id="GO:0004746">
    <property type="term" value="F:riboflavin synthase activity"/>
    <property type="evidence" value="ECO:0007669"/>
    <property type="project" value="UniProtKB-EC"/>
</dbReference>
<dbReference type="GO" id="GO:0009231">
    <property type="term" value="P:riboflavin biosynthetic process"/>
    <property type="evidence" value="ECO:0007669"/>
    <property type="project" value="UniProtKB-UniPathway"/>
</dbReference>
<dbReference type="CDD" id="cd00402">
    <property type="entry name" value="Riboflavin_synthase_like"/>
    <property type="match status" value="1"/>
</dbReference>
<dbReference type="FunFam" id="2.40.30.20:FF:000003">
    <property type="entry name" value="Riboflavin synthase, alpha subunit"/>
    <property type="match status" value="1"/>
</dbReference>
<dbReference type="Gene3D" id="2.40.30.20">
    <property type="match status" value="2"/>
</dbReference>
<dbReference type="InterPro" id="IPR023366">
    <property type="entry name" value="ATP_synth_asu-like_sf"/>
</dbReference>
<dbReference type="InterPro" id="IPR001783">
    <property type="entry name" value="Lumazine-bd"/>
</dbReference>
<dbReference type="InterPro" id="IPR026017">
    <property type="entry name" value="Lumazine-bd_dom"/>
</dbReference>
<dbReference type="InterPro" id="IPR017938">
    <property type="entry name" value="Riboflavin_synthase-like_b-brl"/>
</dbReference>
<dbReference type="NCBIfam" id="NF006767">
    <property type="entry name" value="PRK09289.1"/>
    <property type="match status" value="1"/>
</dbReference>
<dbReference type="NCBIfam" id="NF009566">
    <property type="entry name" value="PRK13020.1"/>
    <property type="match status" value="1"/>
</dbReference>
<dbReference type="NCBIfam" id="TIGR00187">
    <property type="entry name" value="ribE"/>
    <property type="match status" value="1"/>
</dbReference>
<dbReference type="PANTHER" id="PTHR21098:SF0">
    <property type="entry name" value="RIBOFLAVIN SYNTHASE"/>
    <property type="match status" value="1"/>
</dbReference>
<dbReference type="PANTHER" id="PTHR21098">
    <property type="entry name" value="RIBOFLAVIN SYNTHASE ALPHA CHAIN"/>
    <property type="match status" value="1"/>
</dbReference>
<dbReference type="Pfam" id="PF00677">
    <property type="entry name" value="Lum_binding"/>
    <property type="match status" value="2"/>
</dbReference>
<dbReference type="PIRSF" id="PIRSF000498">
    <property type="entry name" value="Riboflavin_syn_A"/>
    <property type="match status" value="1"/>
</dbReference>
<dbReference type="SUPFAM" id="SSF63380">
    <property type="entry name" value="Riboflavin synthase domain-like"/>
    <property type="match status" value="2"/>
</dbReference>
<dbReference type="PROSITE" id="PS51177">
    <property type="entry name" value="LUMAZINE_BIND"/>
    <property type="match status" value="2"/>
</dbReference>
<name>RISA_BUCBP</name>
<accession>Q89AX1</accession>
<sequence length="212" mass="23742">MFTGIVRGLGKVVKILKEKKISQWEVETSNELVKNLMLGASISCNGCCLTVRNIFRTIFCVDIVEETLRSTSLNTIIVGQYINLERSIKFGEEVGGHLVSGHIITTGVVSDKKELFSNQELWISLSASFFIKYFFYKGFVCVDGISLTIGSIKNNAFCVFLIPETILRTTIGQKIIGDVVNIEIDFYTQITVDSVERLLKVHPSKFINCIDI</sequence>
<reference key="1">
    <citation type="journal article" date="2003" name="Proc. Natl. Acad. Sci. U.S.A.">
        <title>Reductive genome evolution in Buchnera aphidicola.</title>
        <authorList>
            <person name="van Ham R.C.H.J."/>
            <person name="Kamerbeek J."/>
            <person name="Palacios C."/>
            <person name="Rausell C."/>
            <person name="Abascal F."/>
            <person name="Bastolla U."/>
            <person name="Fernandez J.M."/>
            <person name="Jimenez L."/>
            <person name="Postigo M."/>
            <person name="Silva F.J."/>
            <person name="Tamames J."/>
            <person name="Viguera E."/>
            <person name="Latorre A."/>
            <person name="Valencia A."/>
            <person name="Moran F."/>
            <person name="Moya A."/>
        </authorList>
    </citation>
    <scope>NUCLEOTIDE SEQUENCE [LARGE SCALE GENOMIC DNA]</scope>
    <source>
        <strain>Bp</strain>
    </source>
</reference>
<feature type="chain" id="PRO_0000068162" description="Riboflavin synthase">
    <location>
        <begin position="1"/>
        <end position="212"/>
    </location>
</feature>
<feature type="repeat" description="Lumazine-binding 1">
    <location>
        <begin position="1"/>
        <end position="97"/>
    </location>
</feature>
<feature type="repeat" description="Lumazine-binding 2">
    <location>
        <begin position="98"/>
        <end position="195"/>
    </location>
</feature>
<feature type="binding site" evidence="3">
    <location>
        <begin position="4"/>
        <end position="6"/>
    </location>
    <ligand>
        <name>2,4-dihydroxypteridine</name>
        <dbReference type="ChEBI" id="CHEBI:16489"/>
        <label>1</label>
    </ligand>
</feature>
<feature type="binding site" evidence="3">
    <location>
        <begin position="48"/>
        <end position="50"/>
    </location>
    <ligand>
        <name>2,4-dihydroxypteridine</name>
        <dbReference type="ChEBI" id="CHEBI:16489"/>
        <label>2</label>
        <note>ligand shared between two trimeric partners</note>
    </ligand>
</feature>
<feature type="binding site" evidence="2">
    <location>
        <begin position="62"/>
        <end position="67"/>
    </location>
    <ligand>
        <name>2,4-dihydroxypteridine</name>
        <dbReference type="ChEBI" id="CHEBI:16489"/>
        <label>2</label>
        <note>ligand shared between two trimeric partners</note>
    </ligand>
</feature>
<feature type="binding site" evidence="3">
    <location>
        <begin position="101"/>
        <end position="103"/>
    </location>
    <ligand>
        <name>2,4-dihydroxypteridine</name>
        <dbReference type="ChEBI" id="CHEBI:16489"/>
        <label>2</label>
        <note>ligand shared between two trimeric partners</note>
    </ligand>
</feature>
<feature type="binding site" description="in other chain" evidence="3">
    <location>
        <position position="137"/>
    </location>
    <ligand>
        <name>2,4-dihydroxypteridine</name>
        <dbReference type="ChEBI" id="CHEBI:16489"/>
        <label>2</label>
        <note>ligand shared between two trimeric partners</note>
    </ligand>
</feature>
<feature type="binding site" evidence="3">
    <location>
        <begin position="146"/>
        <end position="148"/>
    </location>
    <ligand>
        <name>2,4-dihydroxypteridine</name>
        <dbReference type="ChEBI" id="CHEBI:16489"/>
        <label>1</label>
    </ligand>
</feature>
<feature type="binding site" evidence="3">
    <location>
        <begin position="160"/>
        <end position="165"/>
    </location>
    <ligand>
        <name>2,4-dihydroxypteridine</name>
        <dbReference type="ChEBI" id="CHEBI:16489"/>
        <label>1</label>
    </ligand>
</feature>
<gene>
    <name type="primary">ribE</name>
    <name type="ordered locus">bbp_107</name>
</gene>
<proteinExistence type="inferred from homology"/>
<evidence type="ECO:0000250" key="1"/>
<evidence type="ECO:0000250" key="2">
    <source>
        <dbReference type="UniProtKB" id="P0AFU8"/>
    </source>
</evidence>
<evidence type="ECO:0000250" key="3">
    <source>
        <dbReference type="UniProtKB" id="Q2YN92"/>
    </source>
</evidence>
<keyword id="KW-1185">Reference proteome</keyword>
<keyword id="KW-0677">Repeat</keyword>
<keyword id="KW-0686">Riboflavin biosynthesis</keyword>
<keyword id="KW-0808">Transferase</keyword>